<feature type="initiator methionine" description="Removed" evidence="5">
    <location>
        <position position="1"/>
    </location>
</feature>
<feature type="chain" id="PRO_0000156449" description="Spermidine synthase 2">
    <location>
        <begin position="2"/>
        <end position="340"/>
    </location>
</feature>
<feature type="domain" description="PABS">
    <location>
        <begin position="49"/>
        <end position="286"/>
    </location>
</feature>
<feature type="region of interest" description="Disordered" evidence="2">
    <location>
        <begin position="1"/>
        <end position="41"/>
    </location>
</feature>
<feature type="active site" description="Proton acceptor" evidence="1">
    <location>
        <position position="205"/>
    </location>
</feature>
<feature type="binding site" evidence="1">
    <location>
        <position position="80"/>
    </location>
    <ligand>
        <name>S-adenosyl 3-(methylsulfanyl)propylamine</name>
        <dbReference type="ChEBI" id="CHEBI:57443"/>
    </ligand>
</feature>
<feature type="binding site" evidence="1">
    <location>
        <position position="110"/>
    </location>
    <ligand>
        <name>putrescine</name>
        <dbReference type="ChEBI" id="CHEBI:326268"/>
    </ligand>
</feature>
<feature type="binding site" evidence="1">
    <location>
        <position position="111"/>
    </location>
    <ligand>
        <name>S-adenosyl 3-(methylsulfanyl)propylamine</name>
        <dbReference type="ChEBI" id="CHEBI:57443"/>
    </ligand>
</feature>
<feature type="binding site" evidence="1">
    <location>
        <position position="135"/>
    </location>
    <ligand>
        <name>S-adenosyl 3-(methylsulfanyl)propylamine</name>
        <dbReference type="ChEBI" id="CHEBI:57443"/>
    </ligand>
</feature>
<feature type="binding site" evidence="1">
    <location>
        <position position="155"/>
    </location>
    <ligand>
        <name>S-adenosyl 3-(methylsulfanyl)propylamine</name>
        <dbReference type="ChEBI" id="CHEBI:57443"/>
    </ligand>
</feature>
<feature type="binding site" evidence="1">
    <location>
        <begin position="186"/>
        <end position="187"/>
    </location>
    <ligand>
        <name>S-adenosyl 3-(methylsulfanyl)propylamine</name>
        <dbReference type="ChEBI" id="CHEBI:57443"/>
    </ligand>
</feature>
<feature type="binding site" evidence="1">
    <location>
        <begin position="205"/>
        <end position="208"/>
    </location>
    <ligand>
        <name>putrescine</name>
        <dbReference type="ChEBI" id="CHEBI:326268"/>
    </ligand>
</feature>
<feature type="binding site" evidence="1">
    <location>
        <position position="205"/>
    </location>
    <ligand>
        <name>S-adenosyl 3-(methylsulfanyl)propylamine</name>
        <dbReference type="ChEBI" id="CHEBI:57443"/>
    </ligand>
</feature>
<feature type="binding site" evidence="1">
    <location>
        <position position="274"/>
    </location>
    <ligand>
        <name>putrescine</name>
        <dbReference type="ChEBI" id="CHEBI:326268"/>
    </ligand>
</feature>
<feature type="modified residue" description="N-acetylserine" evidence="5">
    <location>
        <position position="2"/>
    </location>
</feature>
<feature type="sequence conflict" description="In Ref. 5; BAA24536." evidence="4" ref="5">
    <original>IPG</original>
    <variation>TRP</variation>
    <location>
        <begin position="48"/>
        <end position="50"/>
    </location>
</feature>
<feature type="strand" evidence="6">
    <location>
        <begin position="44"/>
        <end position="48"/>
    </location>
</feature>
<feature type="strand" evidence="6">
    <location>
        <begin position="51"/>
        <end position="53"/>
    </location>
</feature>
<feature type="strand" evidence="6">
    <location>
        <begin position="62"/>
        <end position="76"/>
    </location>
</feature>
<feature type="strand" evidence="6">
    <location>
        <begin position="81"/>
        <end position="90"/>
    </location>
</feature>
<feature type="strand" evidence="6">
    <location>
        <begin position="92"/>
        <end position="96"/>
    </location>
</feature>
<feature type="strand" evidence="6">
    <location>
        <begin position="99"/>
        <end position="103"/>
    </location>
</feature>
<feature type="turn" evidence="6">
    <location>
        <begin position="104"/>
        <end position="107"/>
    </location>
</feature>
<feature type="helix" evidence="6">
    <location>
        <begin position="108"/>
        <end position="119"/>
    </location>
</feature>
<feature type="strand" evidence="6">
    <location>
        <begin position="121"/>
        <end position="124"/>
    </location>
</feature>
<feature type="strand" evidence="6">
    <location>
        <begin position="127"/>
        <end position="131"/>
    </location>
</feature>
<feature type="helix" evidence="6">
    <location>
        <begin position="137"/>
        <end position="143"/>
    </location>
</feature>
<feature type="strand" evidence="6">
    <location>
        <begin position="150"/>
        <end position="154"/>
    </location>
</feature>
<feature type="helix" evidence="6">
    <location>
        <begin position="158"/>
        <end position="167"/>
    </location>
</feature>
<feature type="helix" evidence="6">
    <location>
        <begin position="169"/>
        <end position="172"/>
    </location>
</feature>
<feature type="helix" evidence="6">
    <location>
        <begin position="173"/>
        <end position="176"/>
    </location>
</feature>
<feature type="strand" evidence="6">
    <location>
        <begin position="180"/>
        <end position="183"/>
    </location>
</feature>
<feature type="helix" evidence="6">
    <location>
        <begin position="187"/>
        <end position="192"/>
    </location>
</feature>
<feature type="strand" evidence="6">
    <location>
        <begin position="199"/>
        <end position="204"/>
    </location>
</feature>
<feature type="helix" evidence="6">
    <location>
        <begin position="213"/>
        <end position="217"/>
    </location>
</feature>
<feature type="helix" evidence="6">
    <location>
        <begin position="219"/>
        <end position="228"/>
    </location>
</feature>
<feature type="strand" evidence="6">
    <location>
        <begin position="229"/>
        <end position="238"/>
    </location>
</feature>
<feature type="turn" evidence="6">
    <location>
        <begin position="242"/>
        <end position="244"/>
    </location>
</feature>
<feature type="helix" evidence="6">
    <location>
        <begin position="246"/>
        <end position="259"/>
    </location>
</feature>
<feature type="strand" evidence="6">
    <location>
        <begin position="264"/>
        <end position="270"/>
    </location>
</feature>
<feature type="helix" evidence="6">
    <location>
        <begin position="275"/>
        <end position="277"/>
    </location>
</feature>
<feature type="strand" evidence="6">
    <location>
        <begin position="278"/>
        <end position="285"/>
    </location>
</feature>
<feature type="strand" evidence="6">
    <location>
        <begin position="287"/>
        <end position="289"/>
    </location>
</feature>
<feature type="helix" evidence="6">
    <location>
        <begin position="318"/>
        <end position="323"/>
    </location>
</feature>
<feature type="helix" evidence="6">
    <location>
        <begin position="329"/>
        <end position="335"/>
    </location>
</feature>
<organism>
    <name type="scientific">Arabidopsis thaliana</name>
    <name type="common">Mouse-ear cress</name>
    <dbReference type="NCBI Taxonomy" id="3702"/>
    <lineage>
        <taxon>Eukaryota</taxon>
        <taxon>Viridiplantae</taxon>
        <taxon>Streptophyta</taxon>
        <taxon>Embryophyta</taxon>
        <taxon>Tracheophyta</taxon>
        <taxon>Spermatophyta</taxon>
        <taxon>Magnoliopsida</taxon>
        <taxon>eudicotyledons</taxon>
        <taxon>Gunneridae</taxon>
        <taxon>Pentapetalae</taxon>
        <taxon>rosids</taxon>
        <taxon>malvids</taxon>
        <taxon>Brassicales</taxon>
        <taxon>Brassicaceae</taxon>
        <taxon>Camelineae</taxon>
        <taxon>Arabidopsis</taxon>
    </lineage>
</organism>
<reference key="1">
    <citation type="submission" date="1999-11" db="EMBL/GenBank/DDBJ databases">
        <title>Plant aminopropyltransferase families.</title>
        <authorList>
            <person name="Franceschetti M."/>
            <person name="Michael A.J."/>
        </authorList>
    </citation>
    <scope>NUCLEOTIDE SEQUENCE [MRNA]</scope>
    <source>
        <strain>cv. Columbia</strain>
    </source>
</reference>
<reference key="2">
    <citation type="journal article" date="2000" name="Nature">
        <title>Sequence and analysis of chromosome 1 of the plant Arabidopsis thaliana.</title>
        <authorList>
            <person name="Theologis A."/>
            <person name="Ecker J.R."/>
            <person name="Palm C.J."/>
            <person name="Federspiel N.A."/>
            <person name="Kaul S."/>
            <person name="White O."/>
            <person name="Alonso J."/>
            <person name="Altafi H."/>
            <person name="Araujo R."/>
            <person name="Bowman C.L."/>
            <person name="Brooks S.Y."/>
            <person name="Buehler E."/>
            <person name="Chan A."/>
            <person name="Chao Q."/>
            <person name="Chen H."/>
            <person name="Cheuk R.F."/>
            <person name="Chin C.W."/>
            <person name="Chung M.K."/>
            <person name="Conn L."/>
            <person name="Conway A.B."/>
            <person name="Conway A.R."/>
            <person name="Creasy T.H."/>
            <person name="Dewar K."/>
            <person name="Dunn P."/>
            <person name="Etgu P."/>
            <person name="Feldblyum T.V."/>
            <person name="Feng J.-D."/>
            <person name="Fong B."/>
            <person name="Fujii C.Y."/>
            <person name="Gill J.E."/>
            <person name="Goldsmith A.D."/>
            <person name="Haas B."/>
            <person name="Hansen N.F."/>
            <person name="Hughes B."/>
            <person name="Huizar L."/>
            <person name="Hunter J.L."/>
            <person name="Jenkins J."/>
            <person name="Johnson-Hopson C."/>
            <person name="Khan S."/>
            <person name="Khaykin E."/>
            <person name="Kim C.J."/>
            <person name="Koo H.L."/>
            <person name="Kremenetskaia I."/>
            <person name="Kurtz D.B."/>
            <person name="Kwan A."/>
            <person name="Lam B."/>
            <person name="Langin-Hooper S."/>
            <person name="Lee A."/>
            <person name="Lee J.M."/>
            <person name="Lenz C.A."/>
            <person name="Li J.H."/>
            <person name="Li Y.-P."/>
            <person name="Lin X."/>
            <person name="Liu S.X."/>
            <person name="Liu Z.A."/>
            <person name="Luros J.S."/>
            <person name="Maiti R."/>
            <person name="Marziali A."/>
            <person name="Militscher J."/>
            <person name="Miranda M."/>
            <person name="Nguyen M."/>
            <person name="Nierman W.C."/>
            <person name="Osborne B.I."/>
            <person name="Pai G."/>
            <person name="Peterson J."/>
            <person name="Pham P.K."/>
            <person name="Rizzo M."/>
            <person name="Rooney T."/>
            <person name="Rowley D."/>
            <person name="Sakano H."/>
            <person name="Salzberg S.L."/>
            <person name="Schwartz J.R."/>
            <person name="Shinn P."/>
            <person name="Southwick A.M."/>
            <person name="Sun H."/>
            <person name="Tallon L.J."/>
            <person name="Tambunga G."/>
            <person name="Toriumi M.J."/>
            <person name="Town C.D."/>
            <person name="Utterback T."/>
            <person name="Van Aken S."/>
            <person name="Vaysberg M."/>
            <person name="Vysotskaia V.S."/>
            <person name="Walker M."/>
            <person name="Wu D."/>
            <person name="Yu G."/>
            <person name="Fraser C.M."/>
            <person name="Venter J.C."/>
            <person name="Davis R.W."/>
        </authorList>
    </citation>
    <scope>NUCLEOTIDE SEQUENCE [LARGE SCALE GENOMIC DNA]</scope>
    <source>
        <strain>cv. Columbia</strain>
    </source>
</reference>
<reference key="3">
    <citation type="journal article" date="2017" name="Plant J.">
        <title>Araport11: a complete reannotation of the Arabidopsis thaliana reference genome.</title>
        <authorList>
            <person name="Cheng C.Y."/>
            <person name="Krishnakumar V."/>
            <person name="Chan A.P."/>
            <person name="Thibaud-Nissen F."/>
            <person name="Schobel S."/>
            <person name="Town C.D."/>
        </authorList>
    </citation>
    <scope>GENOME REANNOTATION</scope>
    <source>
        <strain>cv. Columbia</strain>
    </source>
</reference>
<reference key="4">
    <citation type="journal article" date="2003" name="Science">
        <title>Empirical analysis of transcriptional activity in the Arabidopsis genome.</title>
        <authorList>
            <person name="Yamada K."/>
            <person name="Lim J."/>
            <person name="Dale J.M."/>
            <person name="Chen H."/>
            <person name="Shinn P."/>
            <person name="Palm C.J."/>
            <person name="Southwick A.M."/>
            <person name="Wu H.C."/>
            <person name="Kim C.J."/>
            <person name="Nguyen M."/>
            <person name="Pham P.K."/>
            <person name="Cheuk R.F."/>
            <person name="Karlin-Newmann G."/>
            <person name="Liu S.X."/>
            <person name="Lam B."/>
            <person name="Sakano H."/>
            <person name="Wu T."/>
            <person name="Yu G."/>
            <person name="Miranda M."/>
            <person name="Quach H.L."/>
            <person name="Tripp M."/>
            <person name="Chang C.H."/>
            <person name="Lee J.M."/>
            <person name="Toriumi M.J."/>
            <person name="Chan M.M."/>
            <person name="Tang C.C."/>
            <person name="Onodera C.S."/>
            <person name="Deng J.M."/>
            <person name="Akiyama K."/>
            <person name="Ansari Y."/>
            <person name="Arakawa T."/>
            <person name="Banh J."/>
            <person name="Banno F."/>
            <person name="Bowser L."/>
            <person name="Brooks S.Y."/>
            <person name="Carninci P."/>
            <person name="Chao Q."/>
            <person name="Choy N."/>
            <person name="Enju A."/>
            <person name="Goldsmith A.D."/>
            <person name="Gurjal M."/>
            <person name="Hansen N.F."/>
            <person name="Hayashizaki Y."/>
            <person name="Johnson-Hopson C."/>
            <person name="Hsuan V.W."/>
            <person name="Iida K."/>
            <person name="Karnes M."/>
            <person name="Khan S."/>
            <person name="Koesema E."/>
            <person name="Ishida J."/>
            <person name="Jiang P.X."/>
            <person name="Jones T."/>
            <person name="Kawai J."/>
            <person name="Kamiya A."/>
            <person name="Meyers C."/>
            <person name="Nakajima M."/>
            <person name="Narusaka M."/>
            <person name="Seki M."/>
            <person name="Sakurai T."/>
            <person name="Satou M."/>
            <person name="Tamse R."/>
            <person name="Vaysberg M."/>
            <person name="Wallender E.K."/>
            <person name="Wong C."/>
            <person name="Yamamura Y."/>
            <person name="Yuan S."/>
            <person name="Shinozaki K."/>
            <person name="Davis R.W."/>
            <person name="Theologis A."/>
            <person name="Ecker J.R."/>
        </authorList>
    </citation>
    <scope>NUCLEOTIDE SEQUENCE [LARGE SCALE MRNA]</scope>
    <source>
        <strain>cv. Columbia</strain>
    </source>
</reference>
<reference key="5">
    <citation type="journal article" date="1998" name="Plant Cell Physiol.">
        <title>Molecular cloning of plant spermidine synthases.</title>
        <authorList>
            <person name="Hashimoto T."/>
            <person name="Tamaki K."/>
            <person name="Suzuki K."/>
            <person name="Yamada Y."/>
        </authorList>
    </citation>
    <scope>NUCLEOTIDE SEQUENCE [MRNA] OF 48-340</scope>
    <source>
        <strain>cv. Columbia</strain>
    </source>
</reference>
<reference key="6">
    <citation type="journal article" date="2002" name="Plant Cell">
        <title>A polyamine metabolon involving aminopropyl transferase complexes in Arabidopsis.</title>
        <authorList>
            <person name="Panicot M."/>
            <person name="Minguet E.G."/>
            <person name="Ferrando A."/>
            <person name="Alcazar R."/>
            <person name="Blazquez M.A."/>
            <person name="Carbonell J."/>
            <person name="Altabella T."/>
            <person name="Koncz C."/>
            <person name="Tiburcio A.F."/>
        </authorList>
    </citation>
    <scope>INTERACTION WITH SPMS AND SPDSYN1</scope>
</reference>
<reference key="7">
    <citation type="journal article" date="2012" name="Mol. Cell. Proteomics">
        <title>Comparative large-scale characterisation of plant vs. mammal proteins reveals similar and idiosyncratic N-alpha acetylation features.</title>
        <authorList>
            <person name="Bienvenut W.V."/>
            <person name="Sumpton D."/>
            <person name="Martinez A."/>
            <person name="Lilla S."/>
            <person name="Espagne C."/>
            <person name="Meinnel T."/>
            <person name="Giglione C."/>
        </authorList>
    </citation>
    <scope>ACETYLATION [LARGE SCALE ANALYSIS] AT SER-2</scope>
    <scope>CLEAVAGE OF INITIATOR METHIONINE [LARGE SCALE ANALYSIS]</scope>
    <scope>IDENTIFICATION BY MASS SPECTROMETRY [LARGE SCALE ANALYSIS]</scope>
</reference>
<gene>
    <name type="primary">SPDSYN2</name>
    <name type="ordered locus">At1g70310</name>
    <name type="ORF">F17O7.16</name>
</gene>
<accession>O48661</accession>
<accession>O64606</accession>
<evidence type="ECO:0000250" key="1"/>
<evidence type="ECO:0000256" key="2">
    <source>
        <dbReference type="SAM" id="MobiDB-lite"/>
    </source>
</evidence>
<evidence type="ECO:0000269" key="3">
    <source>
    </source>
</evidence>
<evidence type="ECO:0000305" key="4"/>
<evidence type="ECO:0007744" key="5">
    <source>
    </source>
</evidence>
<evidence type="ECO:0007829" key="6">
    <source>
        <dbReference type="PDB" id="6O64"/>
    </source>
</evidence>
<proteinExistence type="evidence at protein level"/>
<keyword id="KW-0002">3D-structure</keyword>
<keyword id="KW-0007">Acetylation</keyword>
<keyword id="KW-0620">Polyamine biosynthesis</keyword>
<keyword id="KW-1185">Reference proteome</keyword>
<keyword id="KW-0745">Spermidine biosynthesis</keyword>
<keyword id="KW-0808">Transferase</keyword>
<name>SPDS2_ARATH</name>
<protein>
    <recommendedName>
        <fullName>Spermidine synthase 2</fullName>
        <shortName>SPDSY 2</shortName>
        <ecNumber>2.5.1.16</ecNumber>
    </recommendedName>
    <alternativeName>
        <fullName>Putrescine aminopropyltransferase 2</fullName>
    </alternativeName>
</protein>
<sequence>MSSTQEASVTDLPVKRPREAEEDNNGGAMETENGGGEIKEPSCMSSIIPGWFSEISPMWPGEAHSLKVEKILFQGKSDYQDVIVFQSATYGKVLVLDGVIQLTERDECAYQEMITHLPLCSISNPKKVLVIGGGDGGVLREVARHSSVEQIDICEIDKMVVDVAKQYFPNVAVGYEDPRVNLIIGDGVAFLKNAAEGTYDAVIVDSSDPIGPAKELFEKPFFESVNRALRPGGVVCTQAESLWLHMDIIEDIVSNCRDIFKGSVNYAWTSVPTYPSGVIGFMLCSSEGPQVDFKKPVSLIDTDESSIKSHCPLKYYNAEIHSAAFCLPSFAKKVIDSKAN</sequence>
<dbReference type="EC" id="2.5.1.16"/>
<dbReference type="EMBL" id="AJ251297">
    <property type="protein sequence ID" value="CAB61615.1"/>
    <property type="molecule type" value="mRNA"/>
</dbReference>
<dbReference type="EMBL" id="AC003671">
    <property type="protein sequence ID" value="AAC18808.1"/>
    <property type="molecule type" value="Genomic_DNA"/>
</dbReference>
<dbReference type="EMBL" id="CP002684">
    <property type="protein sequence ID" value="AEE35044.1"/>
    <property type="molecule type" value="Genomic_DNA"/>
</dbReference>
<dbReference type="EMBL" id="AF375409">
    <property type="protein sequence ID" value="AAK52993.1"/>
    <property type="molecule type" value="mRNA"/>
</dbReference>
<dbReference type="EMBL" id="AB006693">
    <property type="protein sequence ID" value="BAA24536.1"/>
    <property type="molecule type" value="mRNA"/>
</dbReference>
<dbReference type="PIR" id="T01492">
    <property type="entry name" value="T01492"/>
</dbReference>
<dbReference type="RefSeq" id="NP_177188.1">
    <property type="nucleotide sequence ID" value="NM_105699.4"/>
</dbReference>
<dbReference type="PDB" id="6O64">
    <property type="method" value="X-ray"/>
    <property type="resolution" value="2.00 A"/>
    <property type="chains" value="A/B/C/D/E/F/G/H=39-340"/>
</dbReference>
<dbReference type="PDBsum" id="6O64"/>
<dbReference type="SMR" id="O48661"/>
<dbReference type="BioGRID" id="28587">
    <property type="interactions" value="10"/>
</dbReference>
<dbReference type="FunCoup" id="O48661">
    <property type="interactions" value="3506"/>
</dbReference>
<dbReference type="IntAct" id="O48661">
    <property type="interactions" value="2"/>
</dbReference>
<dbReference type="STRING" id="3702.O48661"/>
<dbReference type="iPTMnet" id="O48661"/>
<dbReference type="PaxDb" id="3702-AT1G70310.1"/>
<dbReference type="ProteomicsDB" id="228455"/>
<dbReference type="EnsemblPlants" id="AT1G70310.1">
    <property type="protein sequence ID" value="AT1G70310.1"/>
    <property type="gene ID" value="AT1G70310"/>
</dbReference>
<dbReference type="GeneID" id="843367"/>
<dbReference type="Gramene" id="AT1G70310.1">
    <property type="protein sequence ID" value="AT1G70310.1"/>
    <property type="gene ID" value="AT1G70310"/>
</dbReference>
<dbReference type="KEGG" id="ath:AT1G70310"/>
<dbReference type="Araport" id="AT1G70310"/>
<dbReference type="TAIR" id="AT1G70310">
    <property type="gene designation" value="SPDS2"/>
</dbReference>
<dbReference type="eggNOG" id="KOG1562">
    <property type="taxonomic scope" value="Eukaryota"/>
</dbReference>
<dbReference type="HOGENOM" id="CLU_048199_3_2_1"/>
<dbReference type="InParanoid" id="O48661"/>
<dbReference type="OMA" id="IVENCRQ"/>
<dbReference type="PhylomeDB" id="O48661"/>
<dbReference type="BRENDA" id="2.5.1.16">
    <property type="organism ID" value="399"/>
</dbReference>
<dbReference type="UniPathway" id="UPA00248">
    <property type="reaction ID" value="UER00314"/>
</dbReference>
<dbReference type="CD-CODE" id="4299E36E">
    <property type="entry name" value="Nucleolus"/>
</dbReference>
<dbReference type="PRO" id="PR:O48661"/>
<dbReference type="Proteomes" id="UP000006548">
    <property type="component" value="Chromosome 1"/>
</dbReference>
<dbReference type="ExpressionAtlas" id="O48661">
    <property type="expression patterns" value="baseline and differential"/>
</dbReference>
<dbReference type="GO" id="GO:0005829">
    <property type="term" value="C:cytosol"/>
    <property type="evidence" value="ECO:0007005"/>
    <property type="project" value="TAIR"/>
</dbReference>
<dbReference type="GO" id="GO:0005739">
    <property type="term" value="C:mitochondrion"/>
    <property type="evidence" value="ECO:0007005"/>
    <property type="project" value="TAIR"/>
</dbReference>
<dbReference type="GO" id="GO:0005886">
    <property type="term" value="C:plasma membrane"/>
    <property type="evidence" value="ECO:0007005"/>
    <property type="project" value="TAIR"/>
</dbReference>
<dbReference type="GO" id="GO:0004766">
    <property type="term" value="F:spermidine synthase activity"/>
    <property type="evidence" value="ECO:0000314"/>
    <property type="project" value="TAIR"/>
</dbReference>
<dbReference type="GO" id="GO:0008295">
    <property type="term" value="P:spermidine biosynthetic process"/>
    <property type="evidence" value="ECO:0000314"/>
    <property type="project" value="TAIR"/>
</dbReference>
<dbReference type="CDD" id="cd02440">
    <property type="entry name" value="AdoMet_MTases"/>
    <property type="match status" value="1"/>
</dbReference>
<dbReference type="FunFam" id="2.30.140.10:FF:000003">
    <property type="entry name" value="Spermidine synthase 1"/>
    <property type="match status" value="1"/>
</dbReference>
<dbReference type="FunFam" id="3.40.50.150:FF:000048">
    <property type="entry name" value="Spermidine synthase 1"/>
    <property type="match status" value="1"/>
</dbReference>
<dbReference type="Gene3D" id="2.30.140.10">
    <property type="entry name" value="Spermidine synthase, tetramerisation domain"/>
    <property type="match status" value="1"/>
</dbReference>
<dbReference type="Gene3D" id="3.40.50.150">
    <property type="entry name" value="Vaccinia Virus protein VP39"/>
    <property type="match status" value="1"/>
</dbReference>
<dbReference type="HAMAP" id="MF_00198">
    <property type="entry name" value="Spermidine_synth"/>
    <property type="match status" value="1"/>
</dbReference>
<dbReference type="InterPro" id="IPR030374">
    <property type="entry name" value="PABS"/>
</dbReference>
<dbReference type="InterPro" id="IPR030373">
    <property type="entry name" value="PABS_CS"/>
</dbReference>
<dbReference type="InterPro" id="IPR029063">
    <property type="entry name" value="SAM-dependent_MTases_sf"/>
</dbReference>
<dbReference type="InterPro" id="IPR001045">
    <property type="entry name" value="Spermi_synthase"/>
</dbReference>
<dbReference type="InterPro" id="IPR030668">
    <property type="entry name" value="Spermi_synthase_euk"/>
</dbReference>
<dbReference type="InterPro" id="IPR035246">
    <property type="entry name" value="Spermidine_synt_N"/>
</dbReference>
<dbReference type="InterPro" id="IPR037163">
    <property type="entry name" value="Spermidine_synt_N_sf"/>
</dbReference>
<dbReference type="NCBIfam" id="NF002010">
    <property type="entry name" value="PRK00811.1"/>
    <property type="match status" value="1"/>
</dbReference>
<dbReference type="NCBIfam" id="TIGR00417">
    <property type="entry name" value="speE"/>
    <property type="match status" value="1"/>
</dbReference>
<dbReference type="PANTHER" id="PTHR11558:SF11">
    <property type="entry name" value="SPERMIDINE SYNTHASE"/>
    <property type="match status" value="1"/>
</dbReference>
<dbReference type="PANTHER" id="PTHR11558">
    <property type="entry name" value="SPERMIDINE/SPERMINE SYNTHASE"/>
    <property type="match status" value="1"/>
</dbReference>
<dbReference type="Pfam" id="PF17284">
    <property type="entry name" value="Spermine_synt_N"/>
    <property type="match status" value="1"/>
</dbReference>
<dbReference type="Pfam" id="PF01564">
    <property type="entry name" value="Spermine_synth"/>
    <property type="match status" value="1"/>
</dbReference>
<dbReference type="PIRSF" id="PIRSF000502">
    <property type="entry name" value="Spermidine_synth"/>
    <property type="match status" value="1"/>
</dbReference>
<dbReference type="SUPFAM" id="SSF53335">
    <property type="entry name" value="S-adenosyl-L-methionine-dependent methyltransferases"/>
    <property type="match status" value="1"/>
</dbReference>
<dbReference type="PROSITE" id="PS01330">
    <property type="entry name" value="PABS_1"/>
    <property type="match status" value="1"/>
</dbReference>
<dbReference type="PROSITE" id="PS51006">
    <property type="entry name" value="PABS_2"/>
    <property type="match status" value="1"/>
</dbReference>
<comment type="catalytic activity">
    <reaction>
        <text>S-adenosyl 3-(methylsulfanyl)propylamine + putrescine = S-methyl-5'-thioadenosine + spermidine + H(+)</text>
        <dbReference type="Rhea" id="RHEA:12721"/>
        <dbReference type="ChEBI" id="CHEBI:15378"/>
        <dbReference type="ChEBI" id="CHEBI:17509"/>
        <dbReference type="ChEBI" id="CHEBI:57443"/>
        <dbReference type="ChEBI" id="CHEBI:57834"/>
        <dbReference type="ChEBI" id="CHEBI:326268"/>
        <dbReference type="EC" id="2.5.1.16"/>
    </reaction>
</comment>
<comment type="pathway">
    <text>Amine and polyamine biosynthesis; spermidine biosynthesis; spermidine from putrescine: step 1/1.</text>
</comment>
<comment type="subunit">
    <text evidence="3">Heterodimer. Component of a multiprotein complex. Interacts with SPMS and SPDSYN1.</text>
</comment>
<comment type="interaction">
    <interactant intactId="EBI-1770100">
        <id>O48661</id>
    </interactant>
    <interactant intactId="EBI-1770123">
        <id>Q9ZUB3</id>
        <label>SPDSYN1</label>
    </interactant>
    <organismsDiffer>false</organismsDiffer>
    <experiments>7</experiments>
</comment>
<comment type="interaction">
    <interactant intactId="EBI-1770100">
        <id>O48661</id>
    </interactant>
    <interactant intactId="EBI-1770109">
        <id>Q94BN2</id>
        <label>SPMS</label>
    </interactant>
    <organismsDiffer>false</organismsDiffer>
    <experiments>4</experiments>
</comment>
<comment type="similarity">
    <text evidence="4">Belongs to the spermidine/spermine synthase family.</text>
</comment>